<feature type="chain" id="PRO_1000021385" description="Ribonuclease P protein component">
    <location>
        <begin position="1"/>
        <end position="136"/>
    </location>
</feature>
<organism>
    <name type="scientific">Burkholderia pseudomallei (strain 668)</name>
    <dbReference type="NCBI Taxonomy" id="320373"/>
    <lineage>
        <taxon>Bacteria</taxon>
        <taxon>Pseudomonadati</taxon>
        <taxon>Pseudomonadota</taxon>
        <taxon>Betaproteobacteria</taxon>
        <taxon>Burkholderiales</taxon>
        <taxon>Burkholderiaceae</taxon>
        <taxon>Burkholderia</taxon>
        <taxon>pseudomallei group</taxon>
    </lineage>
</organism>
<comment type="function">
    <text evidence="1">RNaseP catalyzes the removal of the 5'-leader sequence from pre-tRNA to produce the mature 5'-terminus. It can also cleave other RNA substrates such as 4.5S RNA. The protein component plays an auxiliary but essential role in vivo by binding to the 5'-leader sequence and broadening the substrate specificity of the ribozyme.</text>
</comment>
<comment type="catalytic activity">
    <reaction evidence="1">
        <text>Endonucleolytic cleavage of RNA, removing 5'-extranucleotides from tRNA precursor.</text>
        <dbReference type="EC" id="3.1.26.5"/>
    </reaction>
</comment>
<comment type="subunit">
    <text evidence="1">Consists of a catalytic RNA component (M1 or rnpB) and a protein subunit.</text>
</comment>
<comment type="similarity">
    <text evidence="1">Belongs to the RnpA family.</text>
</comment>
<proteinExistence type="inferred from homology"/>
<protein>
    <recommendedName>
        <fullName evidence="1">Ribonuclease P protein component</fullName>
        <shortName evidence="1">RNase P protein</shortName>
        <shortName evidence="1">RNaseP protein</shortName>
        <ecNumber evidence="1">3.1.26.5</ecNumber>
    </recommendedName>
    <alternativeName>
        <fullName evidence="1">Protein C5</fullName>
    </alternativeName>
</protein>
<accession>A3N475</accession>
<keyword id="KW-0255">Endonuclease</keyword>
<keyword id="KW-0378">Hydrolase</keyword>
<keyword id="KW-0540">Nuclease</keyword>
<keyword id="KW-0694">RNA-binding</keyword>
<keyword id="KW-0819">tRNA processing</keyword>
<reference key="1">
    <citation type="journal article" date="2010" name="Genome Biol. Evol.">
        <title>Continuing evolution of Burkholderia mallei through genome reduction and large-scale rearrangements.</title>
        <authorList>
            <person name="Losada L."/>
            <person name="Ronning C.M."/>
            <person name="DeShazer D."/>
            <person name="Woods D."/>
            <person name="Fedorova N."/>
            <person name="Kim H.S."/>
            <person name="Shabalina S.A."/>
            <person name="Pearson T.R."/>
            <person name="Brinkac L."/>
            <person name="Tan P."/>
            <person name="Nandi T."/>
            <person name="Crabtree J."/>
            <person name="Badger J."/>
            <person name="Beckstrom-Sternberg S."/>
            <person name="Saqib M."/>
            <person name="Schutzer S.E."/>
            <person name="Keim P."/>
            <person name="Nierman W.C."/>
        </authorList>
    </citation>
    <scope>NUCLEOTIDE SEQUENCE [LARGE SCALE GENOMIC DNA]</scope>
    <source>
        <strain>668</strain>
    </source>
</reference>
<gene>
    <name evidence="1" type="primary">rnpA</name>
    <name type="ordered locus">BURPS668_0091</name>
</gene>
<sequence>MQASAAFPKAARLLKTDEFSSVFRLRPWRRTAHFVIYGKPTGRDARLGLVIGKKYAARAVTRNLVKRLAREAFRTRRAEFAGWDILLRLHTRFDKKAMPSAASAPLAALCAGEIRELLDRAAREVARRNGAKPASE</sequence>
<dbReference type="EC" id="3.1.26.5" evidence="1"/>
<dbReference type="EMBL" id="CP000570">
    <property type="protein sequence ID" value="ABN84804.1"/>
    <property type="molecule type" value="Genomic_DNA"/>
</dbReference>
<dbReference type="SMR" id="A3N475"/>
<dbReference type="KEGG" id="bpd:BURPS668_0091"/>
<dbReference type="HOGENOM" id="CLU_117179_11_1_4"/>
<dbReference type="GO" id="GO:0030677">
    <property type="term" value="C:ribonuclease P complex"/>
    <property type="evidence" value="ECO:0007669"/>
    <property type="project" value="TreeGrafter"/>
</dbReference>
<dbReference type="GO" id="GO:0042781">
    <property type="term" value="F:3'-tRNA processing endoribonuclease activity"/>
    <property type="evidence" value="ECO:0007669"/>
    <property type="project" value="TreeGrafter"/>
</dbReference>
<dbReference type="GO" id="GO:0004526">
    <property type="term" value="F:ribonuclease P activity"/>
    <property type="evidence" value="ECO:0007669"/>
    <property type="project" value="UniProtKB-UniRule"/>
</dbReference>
<dbReference type="GO" id="GO:0000049">
    <property type="term" value="F:tRNA binding"/>
    <property type="evidence" value="ECO:0007669"/>
    <property type="project" value="UniProtKB-UniRule"/>
</dbReference>
<dbReference type="GO" id="GO:0001682">
    <property type="term" value="P:tRNA 5'-leader removal"/>
    <property type="evidence" value="ECO:0007669"/>
    <property type="project" value="UniProtKB-UniRule"/>
</dbReference>
<dbReference type="Gene3D" id="3.30.230.10">
    <property type="match status" value="1"/>
</dbReference>
<dbReference type="HAMAP" id="MF_00227">
    <property type="entry name" value="RNase_P"/>
    <property type="match status" value="1"/>
</dbReference>
<dbReference type="InterPro" id="IPR020568">
    <property type="entry name" value="Ribosomal_Su5_D2-typ_SF"/>
</dbReference>
<dbReference type="InterPro" id="IPR014721">
    <property type="entry name" value="Ribsml_uS5_D2-typ_fold_subgr"/>
</dbReference>
<dbReference type="InterPro" id="IPR000100">
    <property type="entry name" value="RNase_P"/>
</dbReference>
<dbReference type="InterPro" id="IPR020539">
    <property type="entry name" value="RNase_P_CS"/>
</dbReference>
<dbReference type="NCBIfam" id="TIGR00188">
    <property type="entry name" value="rnpA"/>
    <property type="match status" value="1"/>
</dbReference>
<dbReference type="PANTHER" id="PTHR33992">
    <property type="entry name" value="RIBONUCLEASE P PROTEIN COMPONENT"/>
    <property type="match status" value="1"/>
</dbReference>
<dbReference type="PANTHER" id="PTHR33992:SF1">
    <property type="entry name" value="RIBONUCLEASE P PROTEIN COMPONENT"/>
    <property type="match status" value="1"/>
</dbReference>
<dbReference type="Pfam" id="PF00825">
    <property type="entry name" value="Ribonuclease_P"/>
    <property type="match status" value="1"/>
</dbReference>
<dbReference type="SUPFAM" id="SSF54211">
    <property type="entry name" value="Ribosomal protein S5 domain 2-like"/>
    <property type="match status" value="1"/>
</dbReference>
<dbReference type="PROSITE" id="PS00648">
    <property type="entry name" value="RIBONUCLEASE_P"/>
    <property type="match status" value="1"/>
</dbReference>
<name>RNPA_BURP6</name>
<evidence type="ECO:0000255" key="1">
    <source>
        <dbReference type="HAMAP-Rule" id="MF_00227"/>
    </source>
</evidence>